<sequence length="171" mass="20014">MDYFTLFGLPARYQIDTQALSFRFQDLQRQYHPDKFANGTQAQQLAAVQQSATINQAWQTLRHPLTRAEYLLSLHGFDLASEQHTVRDTAFLMEQLTLREELDDIEQSKDDARLESFIKRVQKMFDARLQQMVEQLDNAAWDAAADTVRKLRFLDKLRSSAEQLEEKLLDF</sequence>
<reference key="1">
    <citation type="journal article" date="2009" name="BMC Genomics">
        <title>Pseudogene accumulation in the evolutionary histories of Salmonella enterica serovars Paratyphi A and Typhi.</title>
        <authorList>
            <person name="Holt K.E."/>
            <person name="Thomson N.R."/>
            <person name="Wain J."/>
            <person name="Langridge G.C."/>
            <person name="Hasan R."/>
            <person name="Bhutta Z.A."/>
            <person name="Quail M.A."/>
            <person name="Norbertczak H."/>
            <person name="Walker D."/>
            <person name="Simmonds M."/>
            <person name="White B."/>
            <person name="Bason N."/>
            <person name="Mungall K."/>
            <person name="Dougan G."/>
            <person name="Parkhill J."/>
        </authorList>
    </citation>
    <scope>NUCLEOTIDE SEQUENCE [LARGE SCALE GENOMIC DNA]</scope>
    <source>
        <strain>AKU_12601</strain>
    </source>
</reference>
<accession>B5BAW9</accession>
<organism>
    <name type="scientific">Salmonella paratyphi A (strain AKU_12601)</name>
    <dbReference type="NCBI Taxonomy" id="554290"/>
    <lineage>
        <taxon>Bacteria</taxon>
        <taxon>Pseudomonadati</taxon>
        <taxon>Pseudomonadota</taxon>
        <taxon>Gammaproteobacteria</taxon>
        <taxon>Enterobacterales</taxon>
        <taxon>Enterobacteriaceae</taxon>
        <taxon>Salmonella</taxon>
    </lineage>
</organism>
<dbReference type="EMBL" id="FM200053">
    <property type="protein sequence ID" value="CAR58425.1"/>
    <property type="molecule type" value="Genomic_DNA"/>
</dbReference>
<dbReference type="RefSeq" id="WP_000384391.1">
    <property type="nucleotide sequence ID" value="NC_011147.1"/>
</dbReference>
<dbReference type="SMR" id="B5BAW9"/>
<dbReference type="KEGG" id="sek:SSPA0308"/>
<dbReference type="HOGENOM" id="CLU_068529_2_0_6"/>
<dbReference type="Proteomes" id="UP000001869">
    <property type="component" value="Chromosome"/>
</dbReference>
<dbReference type="GO" id="GO:1990230">
    <property type="term" value="C:iron-sulfur cluster transfer complex"/>
    <property type="evidence" value="ECO:0007669"/>
    <property type="project" value="TreeGrafter"/>
</dbReference>
<dbReference type="GO" id="GO:0001671">
    <property type="term" value="F:ATPase activator activity"/>
    <property type="evidence" value="ECO:0007669"/>
    <property type="project" value="InterPro"/>
</dbReference>
<dbReference type="GO" id="GO:0051087">
    <property type="term" value="F:protein-folding chaperone binding"/>
    <property type="evidence" value="ECO:0007669"/>
    <property type="project" value="InterPro"/>
</dbReference>
<dbReference type="GO" id="GO:0044571">
    <property type="term" value="P:[2Fe-2S] cluster assembly"/>
    <property type="evidence" value="ECO:0007669"/>
    <property type="project" value="InterPro"/>
</dbReference>
<dbReference type="GO" id="GO:0051259">
    <property type="term" value="P:protein complex oligomerization"/>
    <property type="evidence" value="ECO:0007669"/>
    <property type="project" value="InterPro"/>
</dbReference>
<dbReference type="GO" id="GO:0006457">
    <property type="term" value="P:protein folding"/>
    <property type="evidence" value="ECO:0007669"/>
    <property type="project" value="UniProtKB-UniRule"/>
</dbReference>
<dbReference type="CDD" id="cd06257">
    <property type="entry name" value="DnaJ"/>
    <property type="match status" value="1"/>
</dbReference>
<dbReference type="FunFam" id="1.10.287.110:FF:000008">
    <property type="entry name" value="Co-chaperone protein HscB"/>
    <property type="match status" value="1"/>
</dbReference>
<dbReference type="FunFam" id="1.20.1280.20:FF:000001">
    <property type="entry name" value="Co-chaperone protein HscB"/>
    <property type="match status" value="1"/>
</dbReference>
<dbReference type="Gene3D" id="1.10.287.110">
    <property type="entry name" value="DnaJ domain"/>
    <property type="match status" value="1"/>
</dbReference>
<dbReference type="Gene3D" id="1.20.1280.20">
    <property type="entry name" value="HscB, C-terminal domain"/>
    <property type="match status" value="1"/>
</dbReference>
<dbReference type="HAMAP" id="MF_00682">
    <property type="entry name" value="HscB"/>
    <property type="match status" value="1"/>
</dbReference>
<dbReference type="InterPro" id="IPR001623">
    <property type="entry name" value="DnaJ_domain"/>
</dbReference>
<dbReference type="InterPro" id="IPR004640">
    <property type="entry name" value="HscB"/>
</dbReference>
<dbReference type="InterPro" id="IPR036386">
    <property type="entry name" value="HscB_C_sf"/>
</dbReference>
<dbReference type="InterPro" id="IPR009073">
    <property type="entry name" value="HscB_oligo_C"/>
</dbReference>
<dbReference type="InterPro" id="IPR036869">
    <property type="entry name" value="J_dom_sf"/>
</dbReference>
<dbReference type="NCBIfam" id="TIGR00714">
    <property type="entry name" value="hscB"/>
    <property type="match status" value="1"/>
</dbReference>
<dbReference type="NCBIfam" id="NF003449">
    <property type="entry name" value="PRK05014.1"/>
    <property type="match status" value="1"/>
</dbReference>
<dbReference type="PANTHER" id="PTHR14021">
    <property type="entry name" value="IRON-SULFUR CLUSTER CO-CHAPERONE PROTEIN HSCB"/>
    <property type="match status" value="1"/>
</dbReference>
<dbReference type="PANTHER" id="PTHR14021:SF15">
    <property type="entry name" value="IRON-SULFUR CLUSTER CO-CHAPERONE PROTEIN HSCB"/>
    <property type="match status" value="1"/>
</dbReference>
<dbReference type="Pfam" id="PF07743">
    <property type="entry name" value="HSCB_C"/>
    <property type="match status" value="1"/>
</dbReference>
<dbReference type="SMART" id="SM00271">
    <property type="entry name" value="DnaJ"/>
    <property type="match status" value="1"/>
</dbReference>
<dbReference type="SUPFAM" id="SSF46565">
    <property type="entry name" value="Chaperone J-domain"/>
    <property type="match status" value="1"/>
</dbReference>
<dbReference type="SUPFAM" id="SSF47144">
    <property type="entry name" value="HSC20 (HSCB), C-terminal oligomerisation domain"/>
    <property type="match status" value="1"/>
</dbReference>
<dbReference type="PROSITE" id="PS50076">
    <property type="entry name" value="DNAJ_2"/>
    <property type="match status" value="1"/>
</dbReference>
<comment type="function">
    <text evidence="1">Co-chaperone involved in the maturation of iron-sulfur cluster-containing proteins. Seems to help targeting proteins to be folded toward HscA.</text>
</comment>
<comment type="subunit">
    <text evidence="1">Interacts with HscA and stimulates its ATPase activity. Interacts with IscU.</text>
</comment>
<comment type="similarity">
    <text evidence="1">Belongs to the HscB family.</text>
</comment>
<keyword id="KW-0143">Chaperone</keyword>
<gene>
    <name evidence="1" type="primary">hscB</name>
    <name type="ordered locus">SSPA0308</name>
</gene>
<evidence type="ECO:0000255" key="1">
    <source>
        <dbReference type="HAMAP-Rule" id="MF_00682"/>
    </source>
</evidence>
<feature type="chain" id="PRO_1000131754" description="Co-chaperone protein HscB">
    <location>
        <begin position="1"/>
        <end position="171"/>
    </location>
</feature>
<feature type="domain" description="J" evidence="1">
    <location>
        <begin position="2"/>
        <end position="74"/>
    </location>
</feature>
<name>HSCB_SALPK</name>
<protein>
    <recommendedName>
        <fullName evidence="1">Co-chaperone protein HscB</fullName>
    </recommendedName>
    <alternativeName>
        <fullName evidence="1">Hsc20</fullName>
    </alternativeName>
</protein>
<proteinExistence type="inferred from homology"/>